<organism>
    <name type="scientific">Mycobacterium tuberculosis (strain ATCC 25618 / H37Rv)</name>
    <dbReference type="NCBI Taxonomy" id="83332"/>
    <lineage>
        <taxon>Bacteria</taxon>
        <taxon>Bacillati</taxon>
        <taxon>Actinomycetota</taxon>
        <taxon>Actinomycetes</taxon>
        <taxon>Mycobacteriales</taxon>
        <taxon>Mycobacteriaceae</taxon>
        <taxon>Mycobacterium</taxon>
        <taxon>Mycobacterium tuberculosis complex</taxon>
    </lineage>
</organism>
<comment type="function">
    <text evidence="3">Participates in the development of tolerance to both isoniazid and ethambutol. May function through a MDR-pump like mechanism, although it does not appear to directly transport isoniazid from the cell.</text>
</comment>
<comment type="subunit">
    <text evidence="3">Forms multimeric structures containing a central pore.</text>
</comment>
<comment type="subcellular location">
    <subcellularLocation>
        <location evidence="5">Cell membrane</location>
        <topology evidence="5">Single-pass membrane protein</topology>
    </subcellularLocation>
</comment>
<comment type="induction">
    <text evidence="2 4">Specifically induced by a broad range of inhibitors of cell wall biosynthesis, including antibiotics that inhibit the synthesis of peptidoglycan (ampicillin), arabinogalactam (ethambutol), mycolic acids (isoniazid, ethionamide) and fatty acids (5-chloropyrazinamide). Down-regulated by the nucleoid-associated protein Lsr2.</text>
</comment>
<comment type="disruption phenotype">
    <text evidence="3">Deletion results in increased susceptibility to isoniazid and accumulation of intracellular ethidium bromide.</text>
</comment>
<feature type="chain" id="PRO_0000390791" description="Isoniazid-induced protein IniA">
    <location>
        <begin position="1"/>
        <end position="640"/>
    </location>
</feature>
<feature type="transmembrane region" description="Helical" evidence="1">
    <location>
        <begin position="497"/>
        <end position="519"/>
    </location>
</feature>
<feature type="coiled-coil region" evidence="1">
    <location>
        <begin position="560"/>
        <end position="628"/>
    </location>
</feature>
<gene>
    <name type="primary">iniA</name>
    <name type="ordered locus">Rv0342</name>
</gene>
<evidence type="ECO:0000255" key="1"/>
<evidence type="ECO:0000269" key="2">
    <source>
    </source>
</evidence>
<evidence type="ECO:0000269" key="3">
    <source>
    </source>
</evidence>
<evidence type="ECO:0000269" key="4">
    <source>
    </source>
</evidence>
<evidence type="ECO:0000305" key="5"/>
<name>INIA_MYCTU</name>
<sequence>MVPAGLCAYRDLRRKRARKWGDTVTQPDDPRRVGVIVELIDHTIAIAKLNERGDLVQRLTRARQRITDPQVRVVIAGLLKQGKSQLLNSLLNLPAARVGDDEATVVITVVSYSAQPSARLVLAAGPDGTTAAVDIPVDDISTDVRRAPHAGGREVLRVEVGAPSPLLRGGLAFIDTPGVGGLGQPHLSATLGLLPEADAVLVVSDTSQEFTEPEMWFVRQAHQICPVGAVVATKTDLYPRWREIVNANAAHLQRARVPMPIIAVSSLLRSHAVTLNDKELNEESNFPAIVKFLSEQVLSRATERVRAGVLGEIRSATEQLAVSLGSELSVVNDPNLRDRLASDLERRKREAQQAVQQTALWQQVLGDGFNDLTADVDHDLRTRFRTVTEDAERQIDSCDPTAHWAEIGNDVENAIATAVGDNFVWAYQRSEALADDVARSFADAGLDSVLSAELSPHVMGTDFGRLKALGRMESKPLRRGHKMIIGMRGSYGGVVMIGMLSSVVGLGLFNPLSVGAGLILGRMAYKEDKQNRLLRVRSEAKANVRRFVDDISFVVSKQSRDRLKMIQRLLRDHYREIAEEITRSLTESLQATIAAAQVAETERDNRIRELQRQLGILSQVNDNLAGLEPTLTPRASLGRA</sequence>
<keyword id="KW-0046">Antibiotic resistance</keyword>
<keyword id="KW-1003">Cell membrane</keyword>
<keyword id="KW-0175">Coiled coil</keyword>
<keyword id="KW-0472">Membrane</keyword>
<keyword id="KW-1185">Reference proteome</keyword>
<keyword id="KW-0812">Transmembrane</keyword>
<keyword id="KW-1133">Transmembrane helix</keyword>
<accession>P9WJ99</accession>
<accession>L0T6D8</accession>
<accession>O06293</accession>
<accession>Q7D9Z6</accession>
<reference key="1">
    <citation type="journal article" date="1998" name="Nature">
        <title>Deciphering the biology of Mycobacterium tuberculosis from the complete genome sequence.</title>
        <authorList>
            <person name="Cole S.T."/>
            <person name="Brosch R."/>
            <person name="Parkhill J."/>
            <person name="Garnier T."/>
            <person name="Churcher C.M."/>
            <person name="Harris D.E."/>
            <person name="Gordon S.V."/>
            <person name="Eiglmeier K."/>
            <person name="Gas S."/>
            <person name="Barry C.E. III"/>
            <person name="Tekaia F."/>
            <person name="Badcock K."/>
            <person name="Basham D."/>
            <person name="Brown D."/>
            <person name="Chillingworth T."/>
            <person name="Connor R."/>
            <person name="Davies R.M."/>
            <person name="Devlin K."/>
            <person name="Feltwell T."/>
            <person name="Gentles S."/>
            <person name="Hamlin N."/>
            <person name="Holroyd S."/>
            <person name="Hornsby T."/>
            <person name="Jagels K."/>
            <person name="Krogh A."/>
            <person name="McLean J."/>
            <person name="Moule S."/>
            <person name="Murphy L.D."/>
            <person name="Oliver S."/>
            <person name="Osborne J."/>
            <person name="Quail M.A."/>
            <person name="Rajandream M.A."/>
            <person name="Rogers J."/>
            <person name="Rutter S."/>
            <person name="Seeger K."/>
            <person name="Skelton S."/>
            <person name="Squares S."/>
            <person name="Squares R."/>
            <person name="Sulston J.E."/>
            <person name="Taylor K."/>
            <person name="Whitehead S."/>
            <person name="Barrell B.G."/>
        </authorList>
    </citation>
    <scope>NUCLEOTIDE SEQUENCE [LARGE SCALE GENOMIC DNA]</scope>
    <source>
        <strain>ATCC 25618 / H37Rv</strain>
    </source>
</reference>
<reference key="2">
    <citation type="journal article" date="2000" name="J. Bacteriol.">
        <title>Characterization of the Mycobacterium tuberculosis iniBAC promoter, a promoter that responds to cell wall biosynthesis inhibition.</title>
        <authorList>
            <person name="Alland D."/>
            <person name="Steyn A.J."/>
            <person name="Weisbrod T."/>
            <person name="Aldrich K."/>
            <person name="Jacobs W.R. Jr."/>
        </authorList>
    </citation>
    <scope>INDUCTION</scope>
</reference>
<reference key="3">
    <citation type="journal article" date="2005" name="Mol. Microbiol.">
        <title>The Mycobacterium tuberculosis iniA gene is essential for activity of an efflux pump that confers drug tolerance to both isoniazid and ethambutol.</title>
        <authorList>
            <person name="Colangeli R."/>
            <person name="Helb D."/>
            <person name="Sridharan S."/>
            <person name="Sun J."/>
            <person name="Varma-Basil M."/>
            <person name="Hazbon M.H."/>
            <person name="Harbacheuski R."/>
            <person name="Megjugorac N.J."/>
            <person name="Jacobs W.R. Jr."/>
            <person name="Holzenburg A."/>
            <person name="Sacchettini J.C."/>
            <person name="Alland D."/>
        </authorList>
    </citation>
    <scope>FUNCTION</scope>
    <scope>SUBUNIT</scope>
    <scope>DISRUPTION PHENOTYPE</scope>
</reference>
<reference key="4">
    <citation type="journal article" date="2007" name="PLoS Pathog.">
        <title>Transcriptional regulation of multi-drug tolerance and antibiotic-induced responses by the histone-like protein Lsr2 in M. tuberculosis.</title>
        <authorList>
            <person name="Colangeli R."/>
            <person name="Helb D."/>
            <person name="Vilcheze C."/>
            <person name="Hazbon M.H."/>
            <person name="Lee C.G."/>
            <person name="Safi H."/>
            <person name="Sayers B."/>
            <person name="Sardone I."/>
            <person name="Jones M.B."/>
            <person name="Fleischmann R.D."/>
            <person name="Peterson S.N."/>
            <person name="Jacobs W.R. Jr."/>
            <person name="Alland D."/>
        </authorList>
    </citation>
    <scope>INDUCTION</scope>
    <source>
        <strain>ATCC 25618 / H37Rv</strain>
    </source>
</reference>
<reference key="5">
    <citation type="journal article" date="2011" name="Mol. Cell. Proteomics">
        <title>Proteogenomic analysis of Mycobacterium tuberculosis by high resolution mass spectrometry.</title>
        <authorList>
            <person name="Kelkar D.S."/>
            <person name="Kumar D."/>
            <person name="Kumar P."/>
            <person name="Balakrishnan L."/>
            <person name="Muthusamy B."/>
            <person name="Yadav A.K."/>
            <person name="Shrivastava P."/>
            <person name="Marimuthu A."/>
            <person name="Anand S."/>
            <person name="Sundaram H."/>
            <person name="Kingsbury R."/>
            <person name="Harsha H.C."/>
            <person name="Nair B."/>
            <person name="Prasad T.S."/>
            <person name="Chauhan D.S."/>
            <person name="Katoch K."/>
            <person name="Katoch V.M."/>
            <person name="Kumar P."/>
            <person name="Chaerkady R."/>
            <person name="Ramachandran S."/>
            <person name="Dash D."/>
            <person name="Pandey A."/>
        </authorList>
    </citation>
    <scope>IDENTIFICATION BY MASS SPECTROMETRY [LARGE SCALE ANALYSIS]</scope>
    <source>
        <strain>ATCC 25618 / H37Rv</strain>
    </source>
</reference>
<protein>
    <recommendedName>
        <fullName>Isoniazid-induced protein IniA</fullName>
    </recommendedName>
</protein>
<proteinExistence type="evidence at protein level"/>
<dbReference type="EMBL" id="AL123456">
    <property type="protein sequence ID" value="CCP43072.1"/>
    <property type="molecule type" value="Genomic_DNA"/>
</dbReference>
<dbReference type="PIR" id="G70573">
    <property type="entry name" value="G70573"/>
</dbReference>
<dbReference type="RefSeq" id="NP_214856.1">
    <property type="nucleotide sequence ID" value="NC_000962.3"/>
</dbReference>
<dbReference type="RefSeq" id="WP_003900124.1">
    <property type="nucleotide sequence ID" value="NC_000962.3"/>
</dbReference>
<dbReference type="SMR" id="P9WJ99"/>
<dbReference type="STRING" id="83332.Rv0342"/>
<dbReference type="TCDB" id="9.B.282.1.1">
    <property type="family name" value="the isoniazid-resistance (iniabc) family"/>
</dbReference>
<dbReference type="PaxDb" id="83332-Rv0342"/>
<dbReference type="DNASU" id="886510"/>
<dbReference type="GeneID" id="886510"/>
<dbReference type="KEGG" id="mtu:Rv0342"/>
<dbReference type="KEGG" id="mtv:RVBD_0342"/>
<dbReference type="PATRIC" id="fig|83332.111.peg.378"/>
<dbReference type="TubercuList" id="Rv0342"/>
<dbReference type="eggNOG" id="COG0699">
    <property type="taxonomic scope" value="Bacteria"/>
</dbReference>
<dbReference type="InParanoid" id="P9WJ99"/>
<dbReference type="OrthoDB" id="3798616at2"/>
<dbReference type="Proteomes" id="UP000001584">
    <property type="component" value="Chromosome"/>
</dbReference>
<dbReference type="GO" id="GO:0009274">
    <property type="term" value="C:peptidoglycan-based cell wall"/>
    <property type="evidence" value="ECO:0007005"/>
    <property type="project" value="MTBBASE"/>
</dbReference>
<dbReference type="GO" id="GO:0005886">
    <property type="term" value="C:plasma membrane"/>
    <property type="evidence" value="ECO:0007005"/>
    <property type="project" value="MTBBASE"/>
</dbReference>
<dbReference type="GO" id="GO:0015562">
    <property type="term" value="F:efflux transmembrane transporter activity"/>
    <property type="evidence" value="ECO:0000315"/>
    <property type="project" value="MTBBASE"/>
</dbReference>
<dbReference type="GO" id="GO:0046677">
    <property type="term" value="P:response to antibiotic"/>
    <property type="evidence" value="ECO:0007669"/>
    <property type="project" value="UniProtKB-KW"/>
</dbReference>
<dbReference type="Gene3D" id="3.40.50.300">
    <property type="entry name" value="P-loop containing nucleotide triphosphate hydrolases"/>
    <property type="match status" value="1"/>
</dbReference>
<dbReference type="InterPro" id="IPR045063">
    <property type="entry name" value="Dynamin_N"/>
</dbReference>
<dbReference type="InterPro" id="IPR027417">
    <property type="entry name" value="P-loop_NTPase"/>
</dbReference>
<dbReference type="InterPro" id="IPR051943">
    <property type="entry name" value="TRAFAC_Dynamin-like_GTPase"/>
</dbReference>
<dbReference type="PANTHER" id="PTHR43681:SF1">
    <property type="entry name" value="SARCALUMENIN"/>
    <property type="match status" value="1"/>
</dbReference>
<dbReference type="PANTHER" id="PTHR43681">
    <property type="entry name" value="TRANSMEMBRANE GTPASE FZO"/>
    <property type="match status" value="1"/>
</dbReference>
<dbReference type="Pfam" id="PF00350">
    <property type="entry name" value="Dynamin_N"/>
    <property type="match status" value="1"/>
</dbReference>
<dbReference type="SUPFAM" id="SSF52540">
    <property type="entry name" value="P-loop containing nucleoside triphosphate hydrolases"/>
    <property type="match status" value="1"/>
</dbReference>